<sequence length="250" mass="27273">MTPFRRPIVLATSASAPFPPAEAALTDPDGLLAVGGDLSPQRLLNAYAHGIFPWYSDGRPILWWSPDPRMVFRTDGVRLSSRFKRQLRASTWTVRADTAFEQVIDACAASPRPGQDGTWITAEMQQAYIALHRLGHAHSIEVFDGARLVGGIYGVAVGRMFFGESMFSGESGGSKVALAALAADLHGRGWPLIDAQVENPHLLSMGAERLPRAEFLHDVQRQVALAEQPGSWSQRYGEHAASDLCETHLT</sequence>
<comment type="function">
    <text evidence="1">Functions in the N-end rule pathway of protein degradation where it conjugates Leu, Phe and, less efficiently, Met from aminoacyl-tRNAs to the N-termini of proteins containing an N-terminal arginine or lysine.</text>
</comment>
<comment type="catalytic activity">
    <reaction evidence="1">
        <text>N-terminal L-lysyl-[protein] + L-leucyl-tRNA(Leu) = N-terminal L-leucyl-L-lysyl-[protein] + tRNA(Leu) + H(+)</text>
        <dbReference type="Rhea" id="RHEA:12340"/>
        <dbReference type="Rhea" id="RHEA-COMP:9613"/>
        <dbReference type="Rhea" id="RHEA-COMP:9622"/>
        <dbReference type="Rhea" id="RHEA-COMP:12670"/>
        <dbReference type="Rhea" id="RHEA-COMP:12671"/>
        <dbReference type="ChEBI" id="CHEBI:15378"/>
        <dbReference type="ChEBI" id="CHEBI:65249"/>
        <dbReference type="ChEBI" id="CHEBI:78442"/>
        <dbReference type="ChEBI" id="CHEBI:78494"/>
        <dbReference type="ChEBI" id="CHEBI:133043"/>
        <dbReference type="EC" id="2.3.2.6"/>
    </reaction>
</comment>
<comment type="catalytic activity">
    <reaction evidence="1">
        <text>N-terminal L-arginyl-[protein] + L-leucyl-tRNA(Leu) = N-terminal L-leucyl-L-arginyl-[protein] + tRNA(Leu) + H(+)</text>
        <dbReference type="Rhea" id="RHEA:50416"/>
        <dbReference type="Rhea" id="RHEA-COMP:9613"/>
        <dbReference type="Rhea" id="RHEA-COMP:9622"/>
        <dbReference type="Rhea" id="RHEA-COMP:12672"/>
        <dbReference type="Rhea" id="RHEA-COMP:12673"/>
        <dbReference type="ChEBI" id="CHEBI:15378"/>
        <dbReference type="ChEBI" id="CHEBI:64719"/>
        <dbReference type="ChEBI" id="CHEBI:78442"/>
        <dbReference type="ChEBI" id="CHEBI:78494"/>
        <dbReference type="ChEBI" id="CHEBI:133044"/>
        <dbReference type="EC" id="2.3.2.6"/>
    </reaction>
</comment>
<comment type="catalytic activity">
    <reaction evidence="1">
        <text>L-phenylalanyl-tRNA(Phe) + an N-terminal L-alpha-aminoacyl-[protein] = an N-terminal L-phenylalanyl-L-alpha-aminoacyl-[protein] + tRNA(Phe)</text>
        <dbReference type="Rhea" id="RHEA:43632"/>
        <dbReference type="Rhea" id="RHEA-COMP:9668"/>
        <dbReference type="Rhea" id="RHEA-COMP:9699"/>
        <dbReference type="Rhea" id="RHEA-COMP:10636"/>
        <dbReference type="Rhea" id="RHEA-COMP:10637"/>
        <dbReference type="ChEBI" id="CHEBI:78442"/>
        <dbReference type="ChEBI" id="CHEBI:78531"/>
        <dbReference type="ChEBI" id="CHEBI:78597"/>
        <dbReference type="ChEBI" id="CHEBI:83561"/>
        <dbReference type="EC" id="2.3.2.6"/>
    </reaction>
</comment>
<comment type="subcellular location">
    <subcellularLocation>
        <location evidence="1">Cytoplasm</location>
    </subcellularLocation>
</comment>
<comment type="similarity">
    <text evidence="1">Belongs to the L/F-transferase family.</text>
</comment>
<comment type="sequence caution" evidence="2">
    <conflict type="erroneous initiation">
        <sequence resource="EMBL-CDS" id="BAE69165"/>
    </conflict>
</comment>
<dbReference type="EC" id="2.3.2.6" evidence="1"/>
<dbReference type="EMBL" id="AP008229">
    <property type="protein sequence ID" value="BAE69165.1"/>
    <property type="status" value="ALT_INIT"/>
    <property type="molecule type" value="Genomic_DNA"/>
</dbReference>
<dbReference type="SMR" id="Q2P2R2"/>
<dbReference type="KEGG" id="xom:XOO2410"/>
<dbReference type="HOGENOM" id="CLU_075045_0_0_6"/>
<dbReference type="GO" id="GO:0005737">
    <property type="term" value="C:cytoplasm"/>
    <property type="evidence" value="ECO:0007669"/>
    <property type="project" value="UniProtKB-SubCell"/>
</dbReference>
<dbReference type="GO" id="GO:0008914">
    <property type="term" value="F:leucyl-tRNA--protein transferase activity"/>
    <property type="evidence" value="ECO:0007669"/>
    <property type="project" value="UniProtKB-UniRule"/>
</dbReference>
<dbReference type="GO" id="GO:0030163">
    <property type="term" value="P:protein catabolic process"/>
    <property type="evidence" value="ECO:0007669"/>
    <property type="project" value="UniProtKB-UniRule"/>
</dbReference>
<dbReference type="FunFam" id="3.30.70.3550:FF:000001">
    <property type="entry name" value="Leucyl/phenylalanyl-tRNA--protein transferase"/>
    <property type="match status" value="1"/>
</dbReference>
<dbReference type="Gene3D" id="3.40.630.70">
    <property type="entry name" value="Leucyl/phenylalanyl-tRNA-protein transferase, C-terminal domain"/>
    <property type="match status" value="1"/>
</dbReference>
<dbReference type="Gene3D" id="3.30.70.3550">
    <property type="entry name" value="Leucyl/phenylalanyl-tRNA-protein transferase, N-terminal domain"/>
    <property type="match status" value="1"/>
</dbReference>
<dbReference type="HAMAP" id="MF_00688">
    <property type="entry name" value="Leu_Phe_trans"/>
    <property type="match status" value="1"/>
</dbReference>
<dbReference type="InterPro" id="IPR016181">
    <property type="entry name" value="Acyl_CoA_acyltransferase"/>
</dbReference>
<dbReference type="InterPro" id="IPR004616">
    <property type="entry name" value="Leu/Phe-tRNA_Trfase"/>
</dbReference>
<dbReference type="InterPro" id="IPR042203">
    <property type="entry name" value="Leu/Phe-tRNA_Trfase_C"/>
</dbReference>
<dbReference type="InterPro" id="IPR042221">
    <property type="entry name" value="Leu/Phe-tRNA_Trfase_N"/>
</dbReference>
<dbReference type="NCBIfam" id="TIGR00667">
    <property type="entry name" value="aat"/>
    <property type="match status" value="1"/>
</dbReference>
<dbReference type="PANTHER" id="PTHR30098">
    <property type="entry name" value="LEUCYL/PHENYLALANYL-TRNA--PROTEIN TRANSFERASE"/>
    <property type="match status" value="1"/>
</dbReference>
<dbReference type="PANTHER" id="PTHR30098:SF2">
    <property type="entry name" value="LEUCYL_PHENYLALANYL-TRNA--PROTEIN TRANSFERASE"/>
    <property type="match status" value="1"/>
</dbReference>
<dbReference type="Pfam" id="PF03588">
    <property type="entry name" value="Leu_Phe_trans"/>
    <property type="match status" value="1"/>
</dbReference>
<dbReference type="SUPFAM" id="SSF55729">
    <property type="entry name" value="Acyl-CoA N-acyltransferases (Nat)"/>
    <property type="match status" value="1"/>
</dbReference>
<gene>
    <name evidence="1" type="primary">aat</name>
    <name type="ordered locus">XOO2410</name>
</gene>
<reference key="1">
    <citation type="journal article" date="2005" name="Jpn. Agric. Res. Q.">
        <title>Genome sequence of Xanthomonas oryzae pv. oryzae suggests contribution of large numbers of effector genes and insertion sequences to its race diversity.</title>
        <authorList>
            <person name="Ochiai H."/>
            <person name="Inoue Y."/>
            <person name="Takeya M."/>
            <person name="Sasaki A."/>
            <person name="Kaku H."/>
        </authorList>
    </citation>
    <scope>NUCLEOTIDE SEQUENCE [LARGE SCALE GENOMIC DNA]</scope>
    <source>
        <strain>MAFF 311018</strain>
    </source>
</reference>
<protein>
    <recommendedName>
        <fullName evidence="1">Leucyl/phenylalanyl-tRNA--protein transferase</fullName>
        <ecNumber evidence="1">2.3.2.6</ecNumber>
    </recommendedName>
    <alternativeName>
        <fullName evidence="1">L/F-transferase</fullName>
    </alternativeName>
    <alternativeName>
        <fullName evidence="1">Leucyltransferase</fullName>
    </alternativeName>
    <alternativeName>
        <fullName evidence="1">Phenyalanyltransferase</fullName>
    </alternativeName>
</protein>
<proteinExistence type="inferred from homology"/>
<name>LFTR_XANOM</name>
<feature type="chain" id="PRO_0000258113" description="Leucyl/phenylalanyl-tRNA--protein transferase">
    <location>
        <begin position="1"/>
        <end position="250"/>
    </location>
</feature>
<accession>Q2P2R2</accession>
<keyword id="KW-0012">Acyltransferase</keyword>
<keyword id="KW-0963">Cytoplasm</keyword>
<keyword id="KW-0808">Transferase</keyword>
<evidence type="ECO:0000255" key="1">
    <source>
        <dbReference type="HAMAP-Rule" id="MF_00688"/>
    </source>
</evidence>
<evidence type="ECO:0000305" key="2"/>
<organism>
    <name type="scientific">Xanthomonas oryzae pv. oryzae (strain MAFF 311018)</name>
    <dbReference type="NCBI Taxonomy" id="342109"/>
    <lineage>
        <taxon>Bacteria</taxon>
        <taxon>Pseudomonadati</taxon>
        <taxon>Pseudomonadota</taxon>
        <taxon>Gammaproteobacteria</taxon>
        <taxon>Lysobacterales</taxon>
        <taxon>Lysobacteraceae</taxon>
        <taxon>Xanthomonas</taxon>
    </lineage>
</organism>